<name>AMPP1_ASPCL</name>
<evidence type="ECO:0000250" key="1"/>
<evidence type="ECO:0000305" key="2"/>
<keyword id="KW-0031">Aminopeptidase</keyword>
<keyword id="KW-0378">Hydrolase</keyword>
<keyword id="KW-0464">Manganese</keyword>
<keyword id="KW-0479">Metal-binding</keyword>
<keyword id="KW-0482">Metalloprotease</keyword>
<keyword id="KW-0645">Protease</keyword>
<keyword id="KW-1185">Reference proteome</keyword>
<protein>
    <recommendedName>
        <fullName>Probable Xaa-Pro aminopeptidase P</fullName>
        <shortName>AMPP</shortName>
        <shortName>Aminopeptidase P</shortName>
        <ecNumber>3.4.11.9</ecNumber>
    </recommendedName>
    <alternativeName>
        <fullName>Aminoacylproline aminopeptidase</fullName>
    </alternativeName>
    <alternativeName>
        <fullName>Prolidase</fullName>
    </alternativeName>
</protein>
<dbReference type="EC" id="3.4.11.9"/>
<dbReference type="EMBL" id="DS027049">
    <property type="protein sequence ID" value="EAW12819.1"/>
    <property type="molecule type" value="Genomic_DNA"/>
</dbReference>
<dbReference type="RefSeq" id="XP_001274245.1">
    <property type="nucleotide sequence ID" value="XM_001274244.1"/>
</dbReference>
<dbReference type="SMR" id="A1CAQ1"/>
<dbReference type="STRING" id="344612.A1CAQ1"/>
<dbReference type="MEROPS" id="M24.009"/>
<dbReference type="EnsemblFungi" id="EAW12819">
    <property type="protein sequence ID" value="EAW12819"/>
    <property type="gene ID" value="ACLA_012470"/>
</dbReference>
<dbReference type="GeneID" id="4706520"/>
<dbReference type="KEGG" id="act:ACLA_012470"/>
<dbReference type="VEuPathDB" id="FungiDB:ACLA_012470"/>
<dbReference type="eggNOG" id="KOG2413">
    <property type="taxonomic scope" value="Eukaryota"/>
</dbReference>
<dbReference type="HOGENOM" id="CLU_011781_2_3_1"/>
<dbReference type="OMA" id="EPGMILS"/>
<dbReference type="OrthoDB" id="9995434at2759"/>
<dbReference type="Proteomes" id="UP000006701">
    <property type="component" value="Unassembled WGS sequence"/>
</dbReference>
<dbReference type="GO" id="GO:0005737">
    <property type="term" value="C:cytoplasm"/>
    <property type="evidence" value="ECO:0007669"/>
    <property type="project" value="UniProtKB-ARBA"/>
</dbReference>
<dbReference type="GO" id="GO:0046872">
    <property type="term" value="F:metal ion binding"/>
    <property type="evidence" value="ECO:0007669"/>
    <property type="project" value="UniProtKB-KW"/>
</dbReference>
<dbReference type="GO" id="GO:0070006">
    <property type="term" value="F:metalloaminopeptidase activity"/>
    <property type="evidence" value="ECO:0007669"/>
    <property type="project" value="InterPro"/>
</dbReference>
<dbReference type="GO" id="GO:0006508">
    <property type="term" value="P:proteolysis"/>
    <property type="evidence" value="ECO:0007669"/>
    <property type="project" value="UniProtKB-KW"/>
</dbReference>
<dbReference type="CDD" id="cd01085">
    <property type="entry name" value="APP"/>
    <property type="match status" value="1"/>
</dbReference>
<dbReference type="FunFam" id="3.40.350.10:FF:000010">
    <property type="entry name" value="Probable Xaa-Pro aminopeptidase P"/>
    <property type="match status" value="1"/>
</dbReference>
<dbReference type="FunFam" id="3.90.230.10:FF:000007">
    <property type="entry name" value="Xaa-Pro aminopeptidase P"/>
    <property type="match status" value="1"/>
</dbReference>
<dbReference type="FunFam" id="3.40.350.10:FF:000003">
    <property type="entry name" value="Xaa-pro aminopeptidase P"/>
    <property type="match status" value="1"/>
</dbReference>
<dbReference type="Gene3D" id="3.90.230.10">
    <property type="entry name" value="Creatinase/methionine aminopeptidase superfamily"/>
    <property type="match status" value="1"/>
</dbReference>
<dbReference type="Gene3D" id="3.40.350.10">
    <property type="entry name" value="Creatinase/prolidase N-terminal domain"/>
    <property type="match status" value="2"/>
</dbReference>
<dbReference type="InterPro" id="IPR029149">
    <property type="entry name" value="Creatin/AminoP/Spt16_N"/>
</dbReference>
<dbReference type="InterPro" id="IPR036005">
    <property type="entry name" value="Creatinase/aminopeptidase-like"/>
</dbReference>
<dbReference type="InterPro" id="IPR000587">
    <property type="entry name" value="Creatinase_N"/>
</dbReference>
<dbReference type="InterPro" id="IPR000994">
    <property type="entry name" value="Pept_M24"/>
</dbReference>
<dbReference type="InterPro" id="IPR033740">
    <property type="entry name" value="Pept_M24B"/>
</dbReference>
<dbReference type="InterPro" id="IPR032416">
    <property type="entry name" value="Peptidase_M24_C"/>
</dbReference>
<dbReference type="InterPro" id="IPR001131">
    <property type="entry name" value="Peptidase_M24B_aminopep-P_CS"/>
</dbReference>
<dbReference type="InterPro" id="IPR050422">
    <property type="entry name" value="X-Pro_aminopeptidase_P"/>
</dbReference>
<dbReference type="PANTHER" id="PTHR43763">
    <property type="entry name" value="XAA-PRO AMINOPEPTIDASE 1"/>
    <property type="match status" value="1"/>
</dbReference>
<dbReference type="PANTHER" id="PTHR43763:SF6">
    <property type="entry name" value="XAA-PRO AMINOPEPTIDASE 1"/>
    <property type="match status" value="1"/>
</dbReference>
<dbReference type="Pfam" id="PF01321">
    <property type="entry name" value="Creatinase_N"/>
    <property type="match status" value="1"/>
</dbReference>
<dbReference type="Pfam" id="PF16189">
    <property type="entry name" value="Creatinase_N_2"/>
    <property type="match status" value="1"/>
</dbReference>
<dbReference type="Pfam" id="PF00557">
    <property type="entry name" value="Peptidase_M24"/>
    <property type="match status" value="1"/>
</dbReference>
<dbReference type="Pfam" id="PF16188">
    <property type="entry name" value="Peptidase_M24_C"/>
    <property type="match status" value="1"/>
</dbReference>
<dbReference type="SUPFAM" id="SSF55920">
    <property type="entry name" value="Creatinase/aminopeptidase"/>
    <property type="match status" value="1"/>
</dbReference>
<dbReference type="SUPFAM" id="SSF53092">
    <property type="entry name" value="Creatinase/prolidase N-terminal domain"/>
    <property type="match status" value="1"/>
</dbReference>
<dbReference type="PROSITE" id="PS00491">
    <property type="entry name" value="PROLINE_PEPTIDASE"/>
    <property type="match status" value="1"/>
</dbReference>
<reference key="1">
    <citation type="journal article" date="2008" name="PLoS Genet.">
        <title>Genomic islands in the pathogenic filamentous fungus Aspergillus fumigatus.</title>
        <authorList>
            <person name="Fedorova N.D."/>
            <person name="Khaldi N."/>
            <person name="Joardar V.S."/>
            <person name="Maiti R."/>
            <person name="Amedeo P."/>
            <person name="Anderson M.J."/>
            <person name="Crabtree J."/>
            <person name="Silva J.C."/>
            <person name="Badger J.H."/>
            <person name="Albarraq A."/>
            <person name="Angiuoli S."/>
            <person name="Bussey H."/>
            <person name="Bowyer P."/>
            <person name="Cotty P.J."/>
            <person name="Dyer P.S."/>
            <person name="Egan A."/>
            <person name="Galens K."/>
            <person name="Fraser-Liggett C.M."/>
            <person name="Haas B.J."/>
            <person name="Inman J.M."/>
            <person name="Kent R."/>
            <person name="Lemieux S."/>
            <person name="Malavazi I."/>
            <person name="Orvis J."/>
            <person name="Roemer T."/>
            <person name="Ronning C.M."/>
            <person name="Sundaram J.P."/>
            <person name="Sutton G."/>
            <person name="Turner G."/>
            <person name="Venter J.C."/>
            <person name="White O.R."/>
            <person name="Whitty B.R."/>
            <person name="Youngman P."/>
            <person name="Wolfe K.H."/>
            <person name="Goldman G.H."/>
            <person name="Wortman J.R."/>
            <person name="Jiang B."/>
            <person name="Denning D.W."/>
            <person name="Nierman W.C."/>
        </authorList>
    </citation>
    <scope>NUCLEOTIDE SEQUENCE [LARGE SCALE GENOMIC DNA]</scope>
    <source>
        <strain>ATCC 1007 / CBS 513.65 / DSM 816 / NCTC 3887 / NRRL 1 / QM 1276 / 107</strain>
    </source>
</reference>
<sequence length="658" mass="73114">MLFSRSPFRLCRISAVGQTRQLPFSRPRFLSASVARYAIDMETVNTSERLARLRQLMQEHKVDVYIVPSEDSHQSEYIAPCDGRREFISGFSGSAGTAIVSMTKAALSTDGRYFNQASKQLDSNWLLLKRGVENVPTWQEWTTEQAEGGKVVGVDPSLITAPGARSLAETLRKNGSSLVGVQQNLVDLVWGEDRPAPPREKVRVHPDKFAGKSFQEKITDLRKELENKKTAGFVISMLDEIAWLFNLRGSDIPYNPVFFAYAIITPTTADLYIDEEKLTPEVTSHLGQDVVIKPYDSIFADATALSEARKQDAGEAAAKFLLSNKASWALSLSLGGEEHVEETRSPIADAKAVKNEAELAGMRACHIRDGAALIEYFAWLENELVSKKTSLDEVDAADKLEQIRSKHDLFAGLSFDTISSTGPNGAVIHYKPEKGSCAIIDPEAIYLCDSGAQYLDGTTDVTRTFHFGQPTELEKKAFTLVLKGMIAIDSAVFPKGTSGFALDVLARQFLWKEGLDYLHGTGHGIGSYLNVHEGPIGIGTRVQYTEVPIAPGNVISDEPGFYEDGKFGIRIEICLADVIMAREVQTTHKFGDKPWLGFEHVTMAPIGRNLIEPSLLSESELKWVNDYHAEIWEKTHHFFENDEFTRSWLQRETQPISK</sequence>
<feature type="chain" id="PRO_0000411778" description="Probable Xaa-Pro aminopeptidase P">
    <location>
        <begin position="1"/>
        <end position="658"/>
    </location>
</feature>
<feature type="binding site" evidence="1">
    <location>
        <position position="449"/>
    </location>
    <ligand>
        <name>Mn(2+)</name>
        <dbReference type="ChEBI" id="CHEBI:29035"/>
        <label>2</label>
    </ligand>
</feature>
<feature type="binding site" evidence="1">
    <location>
        <position position="460"/>
    </location>
    <ligand>
        <name>Mn(2+)</name>
        <dbReference type="ChEBI" id="CHEBI:29035"/>
        <label>1</label>
    </ligand>
</feature>
<feature type="binding site" evidence="1">
    <location>
        <position position="460"/>
    </location>
    <ligand>
        <name>Mn(2+)</name>
        <dbReference type="ChEBI" id="CHEBI:29035"/>
        <label>2</label>
    </ligand>
</feature>
<feature type="binding site" evidence="1">
    <location>
        <position position="558"/>
    </location>
    <ligand>
        <name>Mn(2+)</name>
        <dbReference type="ChEBI" id="CHEBI:29035"/>
        <label>1</label>
    </ligand>
</feature>
<feature type="binding site" evidence="1">
    <location>
        <position position="572"/>
    </location>
    <ligand>
        <name>Mn(2+)</name>
        <dbReference type="ChEBI" id="CHEBI:29035"/>
        <label>1</label>
    </ligand>
</feature>
<feature type="binding site" evidence="1">
    <location>
        <position position="572"/>
    </location>
    <ligand>
        <name>Mn(2+)</name>
        <dbReference type="ChEBI" id="CHEBI:29035"/>
        <label>2</label>
    </ligand>
</feature>
<organism>
    <name type="scientific">Aspergillus clavatus (strain ATCC 1007 / CBS 513.65 / DSM 816 / NCTC 3887 / NRRL 1 / QM 1276 / 107)</name>
    <dbReference type="NCBI Taxonomy" id="344612"/>
    <lineage>
        <taxon>Eukaryota</taxon>
        <taxon>Fungi</taxon>
        <taxon>Dikarya</taxon>
        <taxon>Ascomycota</taxon>
        <taxon>Pezizomycotina</taxon>
        <taxon>Eurotiomycetes</taxon>
        <taxon>Eurotiomycetidae</taxon>
        <taxon>Eurotiales</taxon>
        <taxon>Aspergillaceae</taxon>
        <taxon>Aspergillus</taxon>
        <taxon>Aspergillus subgen. Fumigati</taxon>
    </lineage>
</organism>
<proteinExistence type="inferred from homology"/>
<gene>
    <name type="primary">ampp</name>
    <name type="ORF">ACLA_012470</name>
</gene>
<accession>A1CAQ1</accession>
<comment type="function">
    <text evidence="1">Catalyzes the removal of a penultimate prolyl residue from the N-termini of peptides.</text>
</comment>
<comment type="catalytic activity">
    <reaction>
        <text>Release of any N-terminal amino acid, including proline, that is linked to proline, even from a dipeptide or tripeptide.</text>
        <dbReference type="EC" id="3.4.11.9"/>
    </reaction>
</comment>
<comment type="cofactor">
    <cofactor evidence="1">
        <name>Mn(2+)</name>
        <dbReference type="ChEBI" id="CHEBI:29035"/>
    </cofactor>
    <text evidence="1">Binds 2 manganese ions per subunit.</text>
</comment>
<comment type="similarity">
    <text evidence="2">Belongs to the peptidase M24B family.</text>
</comment>